<reference key="1">
    <citation type="journal article" date="1986" name="J. Bacteriol.">
        <title>Molecular cloning and nucleotide sequence of a DNA fragment from Bacillus natto that enhances production of extracellular proteases and levansucrase in Bacillus subtilis.</title>
        <authorList>
            <person name="Nagami Y."/>
            <person name="Tanaka T."/>
        </authorList>
    </citation>
    <scope>NUCLEOTIDE SEQUENCE [GENOMIC DNA]</scope>
    <scope>FUNCTION</scope>
    <source>
        <strain>IFO 3936</strain>
    </source>
</reference>
<sequence length="60" mass="7109">MDDKDLKLILHKTFIEIYSDLEELADIAKKGKPSMEKYVEEIEQRCKQNILAIEIQMKIK</sequence>
<comment type="function">
    <text evidence="1">Stabilizes the phosphorylated form of DegU, leading to enhanced production of levansucrase, alkaline protease, and neutral protease.</text>
</comment>
<gene>
    <name type="primary">degR</name>
    <name type="synonym">prtR</name>
</gene>
<dbReference type="EMBL" id="M12917">
    <property type="protein sequence ID" value="AAA22671.1"/>
    <property type="molecule type" value="Genomic_DNA"/>
</dbReference>
<dbReference type="RefSeq" id="WP_003230774.1">
    <property type="nucleotide sequence ID" value="NZ_SJSU01000032.1"/>
</dbReference>
<dbReference type="SMR" id="P68730"/>
<organism>
    <name type="scientific">Bacillus subtilis subsp. natto</name>
    <dbReference type="NCBI Taxonomy" id="86029"/>
    <lineage>
        <taxon>Bacteria</taxon>
        <taxon>Bacillati</taxon>
        <taxon>Bacillota</taxon>
        <taxon>Bacilli</taxon>
        <taxon>Bacillales</taxon>
        <taxon>Bacillaceae</taxon>
        <taxon>Bacillus</taxon>
    </lineage>
</organism>
<accession>P68730</accession>
<accession>P06563</accession>
<proteinExistence type="predicted"/>
<protein>
    <recommendedName>
        <fullName>Regulatory protein DegR</fullName>
    </recommendedName>
</protein>
<evidence type="ECO:0000269" key="1">
    <source>
    </source>
</evidence>
<keyword id="KW-0804">Transcription</keyword>
<keyword id="KW-0805">Transcription regulation</keyword>
<name>DEGR_BACNA</name>
<feature type="chain" id="PRO_0000079856" description="Regulatory protein DegR">
    <location>
        <begin position="1"/>
        <end position="60"/>
    </location>
</feature>